<reference key="1">
    <citation type="submission" date="2008-05" db="EMBL/GenBank/DDBJ databases">
        <title>Complete sequence of Chlorobium limicola DSM 245.</title>
        <authorList>
            <consortium name="US DOE Joint Genome Institute"/>
            <person name="Lucas S."/>
            <person name="Copeland A."/>
            <person name="Lapidus A."/>
            <person name="Glavina del Rio T."/>
            <person name="Dalin E."/>
            <person name="Tice H."/>
            <person name="Bruce D."/>
            <person name="Goodwin L."/>
            <person name="Pitluck S."/>
            <person name="Schmutz J."/>
            <person name="Larimer F."/>
            <person name="Land M."/>
            <person name="Hauser L."/>
            <person name="Kyrpides N."/>
            <person name="Ovchinnikova G."/>
            <person name="Zhao F."/>
            <person name="Li T."/>
            <person name="Liu Z."/>
            <person name="Overmann J."/>
            <person name="Bryant D.A."/>
            <person name="Richardson P."/>
        </authorList>
    </citation>
    <scope>NUCLEOTIDE SEQUENCE [LARGE SCALE GENOMIC DNA]</scope>
    <source>
        <strain>DSM 245 / NBRC 103803 / 6330</strain>
    </source>
</reference>
<comment type="function">
    <text evidence="1">Is required not only for elongation of protein synthesis but also for the initiation of all mRNA translation through initiator tRNA(fMet) aminoacylation.</text>
</comment>
<comment type="catalytic activity">
    <reaction evidence="1">
        <text>tRNA(Met) + L-methionine + ATP = L-methionyl-tRNA(Met) + AMP + diphosphate</text>
        <dbReference type="Rhea" id="RHEA:13481"/>
        <dbReference type="Rhea" id="RHEA-COMP:9667"/>
        <dbReference type="Rhea" id="RHEA-COMP:9698"/>
        <dbReference type="ChEBI" id="CHEBI:30616"/>
        <dbReference type="ChEBI" id="CHEBI:33019"/>
        <dbReference type="ChEBI" id="CHEBI:57844"/>
        <dbReference type="ChEBI" id="CHEBI:78442"/>
        <dbReference type="ChEBI" id="CHEBI:78530"/>
        <dbReference type="ChEBI" id="CHEBI:456215"/>
        <dbReference type="EC" id="6.1.1.10"/>
    </reaction>
</comment>
<comment type="cofactor">
    <cofactor evidence="1">
        <name>Zn(2+)</name>
        <dbReference type="ChEBI" id="CHEBI:29105"/>
    </cofactor>
    <text evidence="1">Binds 1 zinc ion per subunit.</text>
</comment>
<comment type="subunit">
    <text evidence="1">Homodimer.</text>
</comment>
<comment type="subcellular location">
    <subcellularLocation>
        <location evidence="1">Cytoplasm</location>
    </subcellularLocation>
</comment>
<comment type="similarity">
    <text evidence="1">Belongs to the class-I aminoacyl-tRNA synthetase family. MetG type 1 subfamily.</text>
</comment>
<protein>
    <recommendedName>
        <fullName evidence="1">Methionine--tRNA ligase</fullName>
        <ecNumber evidence="1">6.1.1.10</ecNumber>
    </recommendedName>
    <alternativeName>
        <fullName evidence="1">Methionyl-tRNA synthetase</fullName>
        <shortName evidence="1">MetRS</shortName>
    </alternativeName>
</protein>
<sequence length="702" mass="79502">MQHVTRTLVTTALPYANGPVHLGHLAGVYLPADIYVRYKRMKGEDVIHIGGSDEHGVPITITAEKEGISPQDVVDRYHRMNSEAFRKCGISFDYYGRTSSQGHHDTAKEFFLEIERKGIFRRKTEKLFFDAKAERFLSDRYVTGTCPICNNPEANGDQCEQCGTHLSPTELLNPKSKLSDATPELRDTMHWYFPLGRFQEALEAYVASHEHDWRPNVVNYTRTWLKQGLNDRAITRDLSWGIQVPLDDPEACGKVLYVWFDAVLGYISFTRQWAAEAGDESLWRAYWQDPESRVVNFIGKDNVVFHTLMFPAILMAWNEGRQSGIYNLADNVPASEFMNFEGRKFSKSRNYAVYLGEFLEKFPADTLRYSIAMNYPENKDTDFSWQDFQNRTNGELADTLGNFIKRSVDFTNSRFDGVVPFSCTDDDWNVLGIDWSQTIEKLDQAYEQFHIRETASLGMDIARSANRFLTESEPWKVIKTDREAAAKTMALSLNLCYALAITLYPVIPETAGRIYAMLGFEGSIDARIKRGVSAIEELLAPQLHKGHRIRKESEILFTKIEDADIEPELKKIEKLLADAEKLEAAALSQEMTFKPEISFDDFLKVDLRVATVLGAEKVKKAGKLLKLQLKVGTEARQVLAGIAQFYSPEEMVGKQVVLVANLAERTIRGEISQGMILAVEGADGRLCVVEPVGDEINGQQIQ</sequence>
<gene>
    <name evidence="1" type="primary">metG</name>
    <name type="ordered locus">Clim_1190</name>
</gene>
<proteinExistence type="inferred from homology"/>
<name>SYM_CHLL2</name>
<keyword id="KW-0030">Aminoacyl-tRNA synthetase</keyword>
<keyword id="KW-0067">ATP-binding</keyword>
<keyword id="KW-0963">Cytoplasm</keyword>
<keyword id="KW-0436">Ligase</keyword>
<keyword id="KW-0479">Metal-binding</keyword>
<keyword id="KW-0547">Nucleotide-binding</keyword>
<keyword id="KW-0648">Protein biosynthesis</keyword>
<keyword id="KW-0694">RNA-binding</keyword>
<keyword id="KW-0820">tRNA-binding</keyword>
<keyword id="KW-0862">Zinc</keyword>
<feature type="chain" id="PRO_1000093704" description="Methionine--tRNA ligase">
    <location>
        <begin position="1"/>
        <end position="702"/>
    </location>
</feature>
<feature type="domain" description="tRNA-binding" evidence="1">
    <location>
        <begin position="601"/>
        <end position="702"/>
    </location>
</feature>
<feature type="short sequence motif" description="'HIGH' region">
    <location>
        <begin position="14"/>
        <end position="24"/>
    </location>
</feature>
<feature type="short sequence motif" description="'KMSKS' region">
    <location>
        <begin position="344"/>
        <end position="348"/>
    </location>
</feature>
<feature type="binding site" evidence="1">
    <location>
        <position position="146"/>
    </location>
    <ligand>
        <name>Zn(2+)</name>
        <dbReference type="ChEBI" id="CHEBI:29105"/>
    </ligand>
</feature>
<feature type="binding site" evidence="1">
    <location>
        <position position="149"/>
    </location>
    <ligand>
        <name>Zn(2+)</name>
        <dbReference type="ChEBI" id="CHEBI:29105"/>
    </ligand>
</feature>
<feature type="binding site" evidence="1">
    <location>
        <position position="159"/>
    </location>
    <ligand>
        <name>Zn(2+)</name>
        <dbReference type="ChEBI" id="CHEBI:29105"/>
    </ligand>
</feature>
<feature type="binding site" evidence="1">
    <location>
        <position position="162"/>
    </location>
    <ligand>
        <name>Zn(2+)</name>
        <dbReference type="ChEBI" id="CHEBI:29105"/>
    </ligand>
</feature>
<feature type="binding site" evidence="1">
    <location>
        <position position="347"/>
    </location>
    <ligand>
        <name>ATP</name>
        <dbReference type="ChEBI" id="CHEBI:30616"/>
    </ligand>
</feature>
<dbReference type="EC" id="6.1.1.10" evidence="1"/>
<dbReference type="EMBL" id="CP001097">
    <property type="protein sequence ID" value="ACD90258.1"/>
    <property type="molecule type" value="Genomic_DNA"/>
</dbReference>
<dbReference type="RefSeq" id="WP_012466135.1">
    <property type="nucleotide sequence ID" value="NC_010803.1"/>
</dbReference>
<dbReference type="SMR" id="B3ECI3"/>
<dbReference type="STRING" id="290315.Clim_1190"/>
<dbReference type="KEGG" id="cli:Clim_1190"/>
<dbReference type="eggNOG" id="COG0073">
    <property type="taxonomic scope" value="Bacteria"/>
</dbReference>
<dbReference type="eggNOG" id="COG0143">
    <property type="taxonomic scope" value="Bacteria"/>
</dbReference>
<dbReference type="HOGENOM" id="CLU_009710_1_2_10"/>
<dbReference type="OrthoDB" id="9810191at2"/>
<dbReference type="Proteomes" id="UP000008841">
    <property type="component" value="Chromosome"/>
</dbReference>
<dbReference type="GO" id="GO:0005829">
    <property type="term" value="C:cytosol"/>
    <property type="evidence" value="ECO:0007669"/>
    <property type="project" value="TreeGrafter"/>
</dbReference>
<dbReference type="GO" id="GO:0005524">
    <property type="term" value="F:ATP binding"/>
    <property type="evidence" value="ECO:0007669"/>
    <property type="project" value="UniProtKB-UniRule"/>
</dbReference>
<dbReference type="GO" id="GO:0046872">
    <property type="term" value="F:metal ion binding"/>
    <property type="evidence" value="ECO:0007669"/>
    <property type="project" value="UniProtKB-KW"/>
</dbReference>
<dbReference type="GO" id="GO:0004825">
    <property type="term" value="F:methionine-tRNA ligase activity"/>
    <property type="evidence" value="ECO:0007669"/>
    <property type="project" value="UniProtKB-UniRule"/>
</dbReference>
<dbReference type="GO" id="GO:0000049">
    <property type="term" value="F:tRNA binding"/>
    <property type="evidence" value="ECO:0007669"/>
    <property type="project" value="UniProtKB-KW"/>
</dbReference>
<dbReference type="GO" id="GO:0006431">
    <property type="term" value="P:methionyl-tRNA aminoacylation"/>
    <property type="evidence" value="ECO:0007669"/>
    <property type="project" value="UniProtKB-UniRule"/>
</dbReference>
<dbReference type="CDD" id="cd07957">
    <property type="entry name" value="Anticodon_Ia_Met"/>
    <property type="match status" value="1"/>
</dbReference>
<dbReference type="CDD" id="cd00814">
    <property type="entry name" value="MetRS_core"/>
    <property type="match status" value="1"/>
</dbReference>
<dbReference type="CDD" id="cd02800">
    <property type="entry name" value="tRNA_bind_EcMetRS_like"/>
    <property type="match status" value="1"/>
</dbReference>
<dbReference type="FunFam" id="2.20.28.20:FF:000001">
    <property type="entry name" value="Methionine--tRNA ligase"/>
    <property type="match status" value="1"/>
</dbReference>
<dbReference type="FunFam" id="2.40.50.140:FF:000042">
    <property type="entry name" value="Methionine--tRNA ligase"/>
    <property type="match status" value="1"/>
</dbReference>
<dbReference type="Gene3D" id="3.40.50.620">
    <property type="entry name" value="HUPs"/>
    <property type="match status" value="1"/>
</dbReference>
<dbReference type="Gene3D" id="1.10.730.10">
    <property type="entry name" value="Isoleucyl-tRNA Synthetase, Domain 1"/>
    <property type="match status" value="1"/>
</dbReference>
<dbReference type="Gene3D" id="2.20.28.20">
    <property type="entry name" value="Methionyl-tRNA synthetase, Zn-domain"/>
    <property type="match status" value="1"/>
</dbReference>
<dbReference type="Gene3D" id="2.40.50.140">
    <property type="entry name" value="Nucleic acid-binding proteins"/>
    <property type="match status" value="1"/>
</dbReference>
<dbReference type="HAMAP" id="MF_00098">
    <property type="entry name" value="Met_tRNA_synth_type1"/>
    <property type="match status" value="1"/>
</dbReference>
<dbReference type="InterPro" id="IPR001412">
    <property type="entry name" value="aa-tRNA-synth_I_CS"/>
</dbReference>
<dbReference type="InterPro" id="IPR041872">
    <property type="entry name" value="Anticodon_Met"/>
</dbReference>
<dbReference type="InterPro" id="IPR004495">
    <property type="entry name" value="Met-tRNA-synth_bsu_C"/>
</dbReference>
<dbReference type="InterPro" id="IPR023458">
    <property type="entry name" value="Met-tRNA_ligase_1"/>
</dbReference>
<dbReference type="InterPro" id="IPR014758">
    <property type="entry name" value="Met-tRNA_synth"/>
</dbReference>
<dbReference type="InterPro" id="IPR015413">
    <property type="entry name" value="Methionyl/Leucyl_tRNA_Synth"/>
</dbReference>
<dbReference type="InterPro" id="IPR033911">
    <property type="entry name" value="MetRS_core"/>
</dbReference>
<dbReference type="InterPro" id="IPR029038">
    <property type="entry name" value="MetRS_Zn"/>
</dbReference>
<dbReference type="InterPro" id="IPR012340">
    <property type="entry name" value="NA-bd_OB-fold"/>
</dbReference>
<dbReference type="InterPro" id="IPR014729">
    <property type="entry name" value="Rossmann-like_a/b/a_fold"/>
</dbReference>
<dbReference type="InterPro" id="IPR002547">
    <property type="entry name" value="tRNA-bd_dom"/>
</dbReference>
<dbReference type="InterPro" id="IPR009080">
    <property type="entry name" value="tRNAsynth_Ia_anticodon-bd"/>
</dbReference>
<dbReference type="NCBIfam" id="TIGR00398">
    <property type="entry name" value="metG"/>
    <property type="match status" value="1"/>
</dbReference>
<dbReference type="NCBIfam" id="TIGR00399">
    <property type="entry name" value="metG_C_term"/>
    <property type="match status" value="1"/>
</dbReference>
<dbReference type="NCBIfam" id="NF001100">
    <property type="entry name" value="PRK00133.1"/>
    <property type="match status" value="1"/>
</dbReference>
<dbReference type="PANTHER" id="PTHR45765">
    <property type="entry name" value="METHIONINE--TRNA LIGASE"/>
    <property type="match status" value="1"/>
</dbReference>
<dbReference type="PANTHER" id="PTHR45765:SF1">
    <property type="entry name" value="METHIONINE--TRNA LIGASE, CYTOPLASMIC"/>
    <property type="match status" value="1"/>
</dbReference>
<dbReference type="Pfam" id="PF19303">
    <property type="entry name" value="Anticodon_3"/>
    <property type="match status" value="1"/>
</dbReference>
<dbReference type="Pfam" id="PF09334">
    <property type="entry name" value="tRNA-synt_1g"/>
    <property type="match status" value="1"/>
</dbReference>
<dbReference type="Pfam" id="PF01588">
    <property type="entry name" value="tRNA_bind"/>
    <property type="match status" value="1"/>
</dbReference>
<dbReference type="PRINTS" id="PR01041">
    <property type="entry name" value="TRNASYNTHMET"/>
</dbReference>
<dbReference type="SUPFAM" id="SSF47323">
    <property type="entry name" value="Anticodon-binding domain of a subclass of class I aminoacyl-tRNA synthetases"/>
    <property type="match status" value="1"/>
</dbReference>
<dbReference type="SUPFAM" id="SSF57770">
    <property type="entry name" value="Methionyl-tRNA synthetase (MetRS), Zn-domain"/>
    <property type="match status" value="1"/>
</dbReference>
<dbReference type="SUPFAM" id="SSF50249">
    <property type="entry name" value="Nucleic acid-binding proteins"/>
    <property type="match status" value="1"/>
</dbReference>
<dbReference type="SUPFAM" id="SSF52374">
    <property type="entry name" value="Nucleotidylyl transferase"/>
    <property type="match status" value="1"/>
</dbReference>
<dbReference type="PROSITE" id="PS00178">
    <property type="entry name" value="AA_TRNA_LIGASE_I"/>
    <property type="match status" value="1"/>
</dbReference>
<dbReference type="PROSITE" id="PS50886">
    <property type="entry name" value="TRBD"/>
    <property type="match status" value="1"/>
</dbReference>
<accession>B3ECI3</accession>
<organism>
    <name type="scientific">Chlorobium limicola (strain DSM 245 / NBRC 103803 / 6330)</name>
    <dbReference type="NCBI Taxonomy" id="290315"/>
    <lineage>
        <taxon>Bacteria</taxon>
        <taxon>Pseudomonadati</taxon>
        <taxon>Chlorobiota</taxon>
        <taxon>Chlorobiia</taxon>
        <taxon>Chlorobiales</taxon>
        <taxon>Chlorobiaceae</taxon>
        <taxon>Chlorobium/Pelodictyon group</taxon>
        <taxon>Chlorobium</taxon>
    </lineage>
</organism>
<evidence type="ECO:0000255" key="1">
    <source>
        <dbReference type="HAMAP-Rule" id="MF_00098"/>
    </source>
</evidence>